<protein>
    <recommendedName>
        <fullName evidence="1">3-isopropylmalate dehydrogenase</fullName>
        <ecNumber evidence="1">1.1.1.85</ecNumber>
    </recommendedName>
    <alternativeName>
        <fullName evidence="1">3-IPM-DH</fullName>
    </alternativeName>
    <alternativeName>
        <fullName evidence="1">Beta-IPM dehydrogenase</fullName>
        <shortName evidence="1">IMDH</shortName>
    </alternativeName>
</protein>
<gene>
    <name evidence="1" type="primary">leuB</name>
    <name type="ordered locus">RPA0227</name>
</gene>
<feature type="chain" id="PRO_0000083739" description="3-isopropylmalate dehydrogenase">
    <location>
        <begin position="1"/>
        <end position="370"/>
    </location>
</feature>
<feature type="binding site" evidence="1">
    <location>
        <begin position="77"/>
        <end position="90"/>
    </location>
    <ligand>
        <name>NAD(+)</name>
        <dbReference type="ChEBI" id="CHEBI:57540"/>
    </ligand>
</feature>
<feature type="binding site" evidence="1">
    <location>
        <position position="97"/>
    </location>
    <ligand>
        <name>substrate</name>
    </ligand>
</feature>
<feature type="binding site" evidence="1">
    <location>
        <position position="107"/>
    </location>
    <ligand>
        <name>substrate</name>
    </ligand>
</feature>
<feature type="binding site" evidence="1">
    <location>
        <position position="135"/>
    </location>
    <ligand>
        <name>substrate</name>
    </ligand>
</feature>
<feature type="binding site" evidence="1">
    <location>
        <position position="226"/>
    </location>
    <ligand>
        <name>Mg(2+)</name>
        <dbReference type="ChEBI" id="CHEBI:18420"/>
    </ligand>
</feature>
<feature type="binding site" evidence="1">
    <location>
        <position position="226"/>
    </location>
    <ligand>
        <name>substrate</name>
    </ligand>
</feature>
<feature type="binding site" evidence="1">
    <location>
        <position position="250"/>
    </location>
    <ligand>
        <name>Mg(2+)</name>
        <dbReference type="ChEBI" id="CHEBI:18420"/>
    </ligand>
</feature>
<feature type="binding site" evidence="1">
    <location>
        <position position="254"/>
    </location>
    <ligand>
        <name>Mg(2+)</name>
        <dbReference type="ChEBI" id="CHEBI:18420"/>
    </ligand>
</feature>
<feature type="binding site" evidence="1">
    <location>
        <begin position="290"/>
        <end position="302"/>
    </location>
    <ligand>
        <name>NAD(+)</name>
        <dbReference type="ChEBI" id="CHEBI:57540"/>
    </ligand>
</feature>
<feature type="site" description="Important for catalysis" evidence="1">
    <location>
        <position position="142"/>
    </location>
</feature>
<feature type="site" description="Important for catalysis" evidence="1">
    <location>
        <position position="193"/>
    </location>
</feature>
<comment type="function">
    <text evidence="1">Catalyzes the oxidation of 3-carboxy-2-hydroxy-4-methylpentanoate (3-isopropylmalate) to 3-carboxy-4-methyl-2-oxopentanoate. The product decarboxylates to 4-methyl-2 oxopentanoate.</text>
</comment>
<comment type="catalytic activity">
    <reaction evidence="1">
        <text>(2R,3S)-3-isopropylmalate + NAD(+) = 4-methyl-2-oxopentanoate + CO2 + NADH</text>
        <dbReference type="Rhea" id="RHEA:32271"/>
        <dbReference type="ChEBI" id="CHEBI:16526"/>
        <dbReference type="ChEBI" id="CHEBI:17865"/>
        <dbReference type="ChEBI" id="CHEBI:35121"/>
        <dbReference type="ChEBI" id="CHEBI:57540"/>
        <dbReference type="ChEBI" id="CHEBI:57945"/>
        <dbReference type="EC" id="1.1.1.85"/>
    </reaction>
</comment>
<comment type="cofactor">
    <cofactor evidence="1">
        <name>Mg(2+)</name>
        <dbReference type="ChEBI" id="CHEBI:18420"/>
    </cofactor>
    <cofactor evidence="1">
        <name>Mn(2+)</name>
        <dbReference type="ChEBI" id="CHEBI:29035"/>
    </cofactor>
    <text evidence="1">Binds 1 Mg(2+) or Mn(2+) ion per subunit.</text>
</comment>
<comment type="pathway">
    <text evidence="1">Amino-acid biosynthesis; L-leucine biosynthesis; L-leucine from 3-methyl-2-oxobutanoate: step 3/4.</text>
</comment>
<comment type="subunit">
    <text evidence="1">Homodimer.</text>
</comment>
<comment type="subcellular location">
    <subcellularLocation>
        <location evidence="1">Cytoplasm</location>
    </subcellularLocation>
</comment>
<comment type="similarity">
    <text evidence="1">Belongs to the isocitrate and isopropylmalate dehydrogenases family. LeuB type 1 subfamily.</text>
</comment>
<keyword id="KW-0028">Amino-acid biosynthesis</keyword>
<keyword id="KW-0100">Branched-chain amino acid biosynthesis</keyword>
<keyword id="KW-0963">Cytoplasm</keyword>
<keyword id="KW-0432">Leucine biosynthesis</keyword>
<keyword id="KW-0460">Magnesium</keyword>
<keyword id="KW-0464">Manganese</keyword>
<keyword id="KW-0479">Metal-binding</keyword>
<keyword id="KW-0520">NAD</keyword>
<keyword id="KW-0560">Oxidoreductase</keyword>
<evidence type="ECO:0000255" key="1">
    <source>
        <dbReference type="HAMAP-Rule" id="MF_01033"/>
    </source>
</evidence>
<proteinExistence type="inferred from homology"/>
<reference key="1">
    <citation type="journal article" date="2004" name="Nat. Biotechnol.">
        <title>Complete genome sequence of the metabolically versatile photosynthetic bacterium Rhodopseudomonas palustris.</title>
        <authorList>
            <person name="Larimer F.W."/>
            <person name="Chain P."/>
            <person name="Hauser L."/>
            <person name="Lamerdin J.E."/>
            <person name="Malfatti S."/>
            <person name="Do L."/>
            <person name="Land M.L."/>
            <person name="Pelletier D.A."/>
            <person name="Beatty J.T."/>
            <person name="Lang A.S."/>
            <person name="Tabita F.R."/>
            <person name="Gibson J.L."/>
            <person name="Hanson T.E."/>
            <person name="Bobst C."/>
            <person name="Torres y Torres J.L."/>
            <person name="Peres C."/>
            <person name="Harrison F.H."/>
            <person name="Gibson J."/>
            <person name="Harwood C.S."/>
        </authorList>
    </citation>
    <scope>NUCLEOTIDE SEQUENCE [LARGE SCALE GENOMIC DNA]</scope>
    <source>
        <strain>ATCC BAA-98 / CGA009</strain>
    </source>
</reference>
<sequence length="370" mass="39643">MATHKLLLLPGDGIGTEVMAEVSRLIDWLNKAGIASFETEHGLVGGAAYDADKVAITDATMALAQASDAVIFGAVGGPKWDGVPYDARPEAGLLRLRKDLGLFANLRPAVCYPALADSSSLKRDVVEGLDIMIVRELTGGVYFGEPKTITDLGNGQKRAVDTQVYDTYEIERIGRVAFDLARKRRNKVTSMEKRNVMKTGVLWNEVITAVHDREYKDVQLDHQLADSGGMNLVKWPKQFDVIVTDNLFGDMLSDIAAMLTGSLGMLPSASLGEVDAKTGKRKSMYEPVHGSAPDIAGKGMANPVAMLASFGMALRYSLDMGALADKLDEAIAAVLAKGLRTADIKSEGTTVISTSQMGEAIVTELQALHA</sequence>
<accession>Q6ND82</accession>
<name>LEU3_RHOPA</name>
<dbReference type="EC" id="1.1.1.85" evidence="1"/>
<dbReference type="EMBL" id="BX572593">
    <property type="protein sequence ID" value="CAE25671.1"/>
    <property type="molecule type" value="Genomic_DNA"/>
</dbReference>
<dbReference type="RefSeq" id="WP_011155795.1">
    <property type="nucleotide sequence ID" value="NZ_CP116810.1"/>
</dbReference>
<dbReference type="SMR" id="Q6ND82"/>
<dbReference type="STRING" id="258594.RPA0227"/>
<dbReference type="GeneID" id="66891233"/>
<dbReference type="eggNOG" id="COG0473">
    <property type="taxonomic scope" value="Bacteria"/>
</dbReference>
<dbReference type="HOGENOM" id="CLU_031953_0_3_5"/>
<dbReference type="PhylomeDB" id="Q6ND82"/>
<dbReference type="UniPathway" id="UPA00048">
    <property type="reaction ID" value="UER00072"/>
</dbReference>
<dbReference type="GO" id="GO:0005829">
    <property type="term" value="C:cytosol"/>
    <property type="evidence" value="ECO:0007669"/>
    <property type="project" value="TreeGrafter"/>
</dbReference>
<dbReference type="GO" id="GO:0003862">
    <property type="term" value="F:3-isopropylmalate dehydrogenase activity"/>
    <property type="evidence" value="ECO:0007669"/>
    <property type="project" value="UniProtKB-UniRule"/>
</dbReference>
<dbReference type="GO" id="GO:0000287">
    <property type="term" value="F:magnesium ion binding"/>
    <property type="evidence" value="ECO:0007669"/>
    <property type="project" value="InterPro"/>
</dbReference>
<dbReference type="GO" id="GO:0051287">
    <property type="term" value="F:NAD binding"/>
    <property type="evidence" value="ECO:0007669"/>
    <property type="project" value="InterPro"/>
</dbReference>
<dbReference type="GO" id="GO:0009098">
    <property type="term" value="P:L-leucine biosynthetic process"/>
    <property type="evidence" value="ECO:0007669"/>
    <property type="project" value="UniProtKB-UniRule"/>
</dbReference>
<dbReference type="FunFam" id="3.40.718.10:FF:000006">
    <property type="entry name" value="3-isopropylmalate dehydrogenase"/>
    <property type="match status" value="1"/>
</dbReference>
<dbReference type="Gene3D" id="3.40.718.10">
    <property type="entry name" value="Isopropylmalate Dehydrogenase"/>
    <property type="match status" value="1"/>
</dbReference>
<dbReference type="HAMAP" id="MF_01033">
    <property type="entry name" value="LeuB_type1"/>
    <property type="match status" value="1"/>
</dbReference>
<dbReference type="InterPro" id="IPR019818">
    <property type="entry name" value="IsoCit/isopropylmalate_DH_CS"/>
</dbReference>
<dbReference type="InterPro" id="IPR024084">
    <property type="entry name" value="IsoPropMal-DH-like_dom"/>
</dbReference>
<dbReference type="InterPro" id="IPR004429">
    <property type="entry name" value="Isopropylmalate_DH"/>
</dbReference>
<dbReference type="NCBIfam" id="TIGR00169">
    <property type="entry name" value="leuB"/>
    <property type="match status" value="1"/>
</dbReference>
<dbReference type="PANTHER" id="PTHR42979">
    <property type="entry name" value="3-ISOPROPYLMALATE DEHYDROGENASE"/>
    <property type="match status" value="1"/>
</dbReference>
<dbReference type="PANTHER" id="PTHR42979:SF1">
    <property type="entry name" value="3-ISOPROPYLMALATE DEHYDROGENASE"/>
    <property type="match status" value="1"/>
</dbReference>
<dbReference type="Pfam" id="PF00180">
    <property type="entry name" value="Iso_dh"/>
    <property type="match status" value="1"/>
</dbReference>
<dbReference type="SMART" id="SM01329">
    <property type="entry name" value="Iso_dh"/>
    <property type="match status" value="1"/>
</dbReference>
<dbReference type="SUPFAM" id="SSF53659">
    <property type="entry name" value="Isocitrate/Isopropylmalate dehydrogenase-like"/>
    <property type="match status" value="1"/>
</dbReference>
<dbReference type="PROSITE" id="PS00470">
    <property type="entry name" value="IDH_IMDH"/>
    <property type="match status" value="1"/>
</dbReference>
<organism>
    <name type="scientific">Rhodopseudomonas palustris (strain ATCC BAA-98 / CGA009)</name>
    <dbReference type="NCBI Taxonomy" id="258594"/>
    <lineage>
        <taxon>Bacteria</taxon>
        <taxon>Pseudomonadati</taxon>
        <taxon>Pseudomonadota</taxon>
        <taxon>Alphaproteobacteria</taxon>
        <taxon>Hyphomicrobiales</taxon>
        <taxon>Nitrobacteraceae</taxon>
        <taxon>Rhodopseudomonas</taxon>
    </lineage>
</organism>